<keyword id="KW-0002">3D-structure</keyword>
<keyword id="KW-0249">Electron transport</keyword>
<keyword id="KW-0472">Membrane</keyword>
<keyword id="KW-0496">Mitochondrion</keyword>
<keyword id="KW-0999">Mitochondrion inner membrane</keyword>
<keyword id="KW-0520">NAD</keyword>
<keyword id="KW-1185">Reference proteome</keyword>
<keyword id="KW-0679">Respiratory chain</keyword>
<keyword id="KW-1278">Translocase</keyword>
<keyword id="KW-0812">Transmembrane</keyword>
<keyword id="KW-1133">Transmembrane helix</keyword>
<keyword id="KW-0813">Transport</keyword>
<keyword id="KW-0830">Ubiquinone</keyword>
<accession>P03889</accession>
<accession>O63197</accession>
<accession>Q37653</accession>
<protein>
    <recommendedName>
        <fullName>NADH-ubiquinone oxidoreductase chain 1</fullName>
        <ecNumber evidence="1">7.1.1.2</ecNumber>
    </recommendedName>
    <alternativeName>
        <fullName>NADH dehydrogenase subunit 1</fullName>
    </alternativeName>
</protein>
<reference key="1">
    <citation type="journal article" date="1988" name="Boll. Soc. Ital. Biol. Sper.">
        <title>Nucleotide sequence of the NADH dehydrogenase gene in mitochondrial DNA from rat liver.</title>
        <authorList>
            <person name="Quagliariello C."/>
            <person name="Spena A."/>
        </authorList>
    </citation>
    <scope>NUCLEOTIDE SEQUENCE [GENOMIC DNA]</scope>
</reference>
<reference key="2">
    <citation type="journal article" date="1988" name="Nucleic Acids Res.">
        <title>Nucleotide sequence of rat mitochondrial NADH dehydrogenase subunit 1. GTG, a new initiator codon in vertebrate mitochondrial genome.</title>
        <authorList>
            <person name="Gadaleta G."/>
            <person name="Pepe G."/>
            <person name="de Candia G."/>
            <person name="Quagliariello C."/>
            <person name="Sbisa E."/>
            <person name="Saccone C."/>
        </authorList>
    </citation>
    <scope>NUCLEOTIDE SEQUENCE [GENOMIC DNA]</scope>
    <source>
        <strain>Wistar</strain>
    </source>
</reference>
<reference key="3">
    <citation type="journal article" date="1989" name="J. Mol. Evol.">
        <title>The complete nucleotide sequence of the Rattus norvegicus mitochondrial genome: cryptic signals revealed by comparative analysis between vertebrates.</title>
        <authorList>
            <person name="Gadaleta G."/>
            <person name="Pepe G."/>
            <person name="de Candia G."/>
            <person name="Quagliariello C."/>
            <person name="Sbisa E."/>
            <person name="Saccone C."/>
        </authorList>
    </citation>
    <scope>NUCLEOTIDE SEQUENCE [GENOMIC DNA]</scope>
    <source>
        <strain>Wistar</strain>
    </source>
</reference>
<reference key="4">
    <citation type="journal article" date="2004" name="Nature">
        <title>Genome sequence of the Brown Norway rat yields insights into mammalian evolution.</title>
        <authorList>
            <person name="Gibbs R.A."/>
            <person name="Weinstock G.M."/>
            <person name="Metzker M.L."/>
            <person name="Muzny D.M."/>
            <person name="Sodergren E.J."/>
            <person name="Scherer S."/>
            <person name="Scott G."/>
            <person name="Steffen D."/>
            <person name="Worley K.C."/>
            <person name="Burch P.E."/>
            <person name="Okwuonu G."/>
            <person name="Hines S."/>
            <person name="Lewis L."/>
            <person name="Deramo C."/>
            <person name="Delgado O."/>
            <person name="Dugan-Rocha S."/>
            <person name="Miner G."/>
            <person name="Morgan M."/>
            <person name="Hawes A."/>
            <person name="Gill R."/>
            <person name="Holt R.A."/>
            <person name="Adams M.D."/>
            <person name="Amanatides P.G."/>
            <person name="Baden-Tillson H."/>
            <person name="Barnstead M."/>
            <person name="Chin S."/>
            <person name="Evans C.A."/>
            <person name="Ferriera S."/>
            <person name="Fosler C."/>
            <person name="Glodek A."/>
            <person name="Gu Z."/>
            <person name="Jennings D."/>
            <person name="Kraft C.L."/>
            <person name="Nguyen T."/>
            <person name="Pfannkoch C.M."/>
            <person name="Sitter C."/>
            <person name="Sutton G.G."/>
            <person name="Venter J.C."/>
            <person name="Woodage T."/>
            <person name="Smith D."/>
            <person name="Lee H.-M."/>
            <person name="Gustafson E."/>
            <person name="Cahill P."/>
            <person name="Kana A."/>
            <person name="Doucette-Stamm L."/>
            <person name="Weinstock K."/>
            <person name="Fechtel K."/>
            <person name="Weiss R.B."/>
            <person name="Dunn D.M."/>
            <person name="Green E.D."/>
            <person name="Blakesley R.W."/>
            <person name="Bouffard G.G."/>
            <person name="De Jong P.J."/>
            <person name="Osoegawa K."/>
            <person name="Zhu B."/>
            <person name="Marra M."/>
            <person name="Schein J."/>
            <person name="Bosdet I."/>
            <person name="Fjell C."/>
            <person name="Jones S."/>
            <person name="Krzywinski M."/>
            <person name="Mathewson C."/>
            <person name="Siddiqui A."/>
            <person name="Wye N."/>
            <person name="McPherson J."/>
            <person name="Zhao S."/>
            <person name="Fraser C.M."/>
            <person name="Shetty J."/>
            <person name="Shatsman S."/>
            <person name="Geer K."/>
            <person name="Chen Y."/>
            <person name="Abramzon S."/>
            <person name="Nierman W.C."/>
            <person name="Havlak P.H."/>
            <person name="Chen R."/>
            <person name="Durbin K.J."/>
            <person name="Egan A."/>
            <person name="Ren Y."/>
            <person name="Song X.-Z."/>
            <person name="Li B."/>
            <person name="Liu Y."/>
            <person name="Qin X."/>
            <person name="Cawley S."/>
            <person name="Cooney A.J."/>
            <person name="D'Souza L.M."/>
            <person name="Martin K."/>
            <person name="Wu J.Q."/>
            <person name="Gonzalez-Garay M.L."/>
            <person name="Jackson A.R."/>
            <person name="Kalafus K.J."/>
            <person name="McLeod M.P."/>
            <person name="Milosavljevic A."/>
            <person name="Virk D."/>
            <person name="Volkov A."/>
            <person name="Wheeler D.A."/>
            <person name="Zhang Z."/>
            <person name="Bailey J.A."/>
            <person name="Eichler E.E."/>
            <person name="Tuzun E."/>
            <person name="Birney E."/>
            <person name="Mongin E."/>
            <person name="Ureta-Vidal A."/>
            <person name="Woodwark C."/>
            <person name="Zdobnov E."/>
            <person name="Bork P."/>
            <person name="Suyama M."/>
            <person name="Torrents D."/>
            <person name="Alexandersson M."/>
            <person name="Trask B.J."/>
            <person name="Young J.M."/>
            <person name="Huang H."/>
            <person name="Wang H."/>
            <person name="Xing H."/>
            <person name="Daniels S."/>
            <person name="Gietzen D."/>
            <person name="Schmidt J."/>
            <person name="Stevens K."/>
            <person name="Vitt U."/>
            <person name="Wingrove J."/>
            <person name="Camara F."/>
            <person name="Mar Alba M."/>
            <person name="Abril J.F."/>
            <person name="Guigo R."/>
            <person name="Smit A."/>
            <person name="Dubchak I."/>
            <person name="Rubin E.M."/>
            <person name="Couronne O."/>
            <person name="Poliakov A."/>
            <person name="Huebner N."/>
            <person name="Ganten D."/>
            <person name="Goesele C."/>
            <person name="Hummel O."/>
            <person name="Kreitler T."/>
            <person name="Lee Y.-A."/>
            <person name="Monti J."/>
            <person name="Schulz H."/>
            <person name="Zimdahl H."/>
            <person name="Himmelbauer H."/>
            <person name="Lehrach H."/>
            <person name="Jacob H.J."/>
            <person name="Bromberg S."/>
            <person name="Gullings-Handley J."/>
            <person name="Jensen-Seaman M.I."/>
            <person name="Kwitek A.E."/>
            <person name="Lazar J."/>
            <person name="Pasko D."/>
            <person name="Tonellato P.J."/>
            <person name="Twigger S."/>
            <person name="Ponting C.P."/>
            <person name="Duarte J.M."/>
            <person name="Rice S."/>
            <person name="Goodstadt L."/>
            <person name="Beatson S.A."/>
            <person name="Emes R.D."/>
            <person name="Winter E.E."/>
            <person name="Webber C."/>
            <person name="Brandt P."/>
            <person name="Nyakatura G."/>
            <person name="Adetobi M."/>
            <person name="Chiaromonte F."/>
            <person name="Elnitski L."/>
            <person name="Eswara P."/>
            <person name="Hardison R.C."/>
            <person name="Hou M."/>
            <person name="Kolbe D."/>
            <person name="Makova K."/>
            <person name="Miller W."/>
            <person name="Nekrutenko A."/>
            <person name="Riemer C."/>
            <person name="Schwartz S."/>
            <person name="Taylor J."/>
            <person name="Yang S."/>
            <person name="Zhang Y."/>
            <person name="Lindpaintner K."/>
            <person name="Andrews T.D."/>
            <person name="Caccamo M."/>
            <person name="Clamp M."/>
            <person name="Clarke L."/>
            <person name="Curwen V."/>
            <person name="Durbin R.M."/>
            <person name="Eyras E."/>
            <person name="Searle S.M."/>
            <person name="Cooper G.M."/>
            <person name="Batzoglou S."/>
            <person name="Brudno M."/>
            <person name="Sidow A."/>
            <person name="Stone E.A."/>
            <person name="Payseur B.A."/>
            <person name="Bourque G."/>
            <person name="Lopez-Otin C."/>
            <person name="Puente X.S."/>
            <person name="Chakrabarti K."/>
            <person name="Chatterji S."/>
            <person name="Dewey C."/>
            <person name="Pachter L."/>
            <person name="Bray N."/>
            <person name="Yap V.B."/>
            <person name="Caspi A."/>
            <person name="Tesler G."/>
            <person name="Pevzner P.A."/>
            <person name="Haussler D."/>
            <person name="Roskin K.M."/>
            <person name="Baertsch R."/>
            <person name="Clawson H."/>
            <person name="Furey T.S."/>
            <person name="Hinrichs A.S."/>
            <person name="Karolchik D."/>
            <person name="Kent W.J."/>
            <person name="Rosenbloom K.R."/>
            <person name="Trumbower H."/>
            <person name="Weirauch M."/>
            <person name="Cooper D.N."/>
            <person name="Stenson P.D."/>
            <person name="Ma B."/>
            <person name="Brent M."/>
            <person name="Arumugam M."/>
            <person name="Shteynberg D."/>
            <person name="Copley R.R."/>
            <person name="Taylor M.S."/>
            <person name="Riethman H."/>
            <person name="Mudunuri U."/>
            <person name="Peterson J."/>
            <person name="Guyer M."/>
            <person name="Felsenfeld A."/>
            <person name="Old S."/>
            <person name="Mockrin S."/>
            <person name="Collins F.S."/>
        </authorList>
    </citation>
    <scope>NUCLEOTIDE SEQUENCE [LARGE SCALE GENOMIC DNA]</scope>
    <source>
        <strain>Brown Norway</strain>
    </source>
</reference>
<reference key="5">
    <citation type="journal article" date="1991" name="J. Exp. Med.">
        <title>Generation of T cells with lytic specificity for atypical antigens. I. A mitochondrial antigen in the rat.</title>
        <authorList>
            <person name="Davies J.D."/>
            <person name="Wilson D.H."/>
            <person name="Hermel E."/>
            <person name="Lindahl K.F."/>
            <person name="Butcher G.W."/>
            <person name="Wilson D.B."/>
        </authorList>
    </citation>
    <scope>NUCLEOTIDE SEQUENCE [GENOMIC DNA] OF 1-72</scope>
    <source>
        <strain>Brown Norway</strain>
        <strain>Lewis</strain>
        <tissue>Spleen</tissue>
    </source>
</reference>
<reference key="6">
    <citation type="journal article" date="1995" name="Cell">
        <title>Nonclassical binding of formylated peptide in crystal structure of the MHC class Ib molecule H2-M3.</title>
        <authorList>
            <person name="Wang C.R."/>
            <person name="Castano A.R."/>
            <person name="Peterson P.A."/>
            <person name="Slaughter C."/>
            <person name="Lindahl K.F."/>
            <person name="Deisenhofer J."/>
        </authorList>
    </citation>
    <scope>X-RAY CRYSTALLOGRAPHY (2.1 ANGSTROMS) OF 1-9 IN COMPLEX WITH MHC</scope>
</reference>
<proteinExistence type="evidence at protein level"/>
<name>NU1M_RAT</name>
<evidence type="ECO:0000250" key="1">
    <source>
        <dbReference type="UniProtKB" id="P03886"/>
    </source>
</evidence>
<evidence type="ECO:0000250" key="2">
    <source>
        <dbReference type="UniProtKB" id="P03887"/>
    </source>
</evidence>
<evidence type="ECO:0000255" key="3"/>
<evidence type="ECO:0000305" key="4"/>
<evidence type="ECO:0000312" key="5">
    <source>
        <dbReference type="RGD" id="620555"/>
    </source>
</evidence>
<gene>
    <name evidence="5" type="primary">Mt-nd1</name>
    <name type="synonym">Mtnd1</name>
    <name type="synonym">Nd1</name>
</gene>
<organism>
    <name type="scientific">Rattus norvegicus</name>
    <name type="common">Rat</name>
    <dbReference type="NCBI Taxonomy" id="10116"/>
    <lineage>
        <taxon>Eukaryota</taxon>
        <taxon>Metazoa</taxon>
        <taxon>Chordata</taxon>
        <taxon>Craniata</taxon>
        <taxon>Vertebrata</taxon>
        <taxon>Euteleostomi</taxon>
        <taxon>Mammalia</taxon>
        <taxon>Eutheria</taxon>
        <taxon>Euarchontoglires</taxon>
        <taxon>Glires</taxon>
        <taxon>Rodentia</taxon>
        <taxon>Myomorpha</taxon>
        <taxon>Muroidea</taxon>
        <taxon>Muridae</taxon>
        <taxon>Murinae</taxon>
        <taxon>Rattus</taxon>
    </lineage>
</organism>
<feature type="chain" id="PRO_0000117468" description="NADH-ubiquinone oxidoreductase chain 1">
    <location>
        <begin position="1"/>
        <end position="318"/>
    </location>
</feature>
<feature type="transmembrane region" description="Helical" evidence="3">
    <location>
        <begin position="3"/>
        <end position="23"/>
    </location>
</feature>
<feature type="transmembrane region" description="Helical" evidence="3">
    <location>
        <begin position="70"/>
        <end position="90"/>
    </location>
</feature>
<feature type="transmembrane region" description="Helical" evidence="3">
    <location>
        <begin position="100"/>
        <end position="120"/>
    </location>
</feature>
<feature type="transmembrane region" description="Helical" evidence="3">
    <location>
        <begin position="146"/>
        <end position="166"/>
    </location>
</feature>
<feature type="transmembrane region" description="Helical" evidence="3">
    <location>
        <begin position="171"/>
        <end position="191"/>
    </location>
</feature>
<feature type="transmembrane region" description="Helical" evidence="3">
    <location>
        <begin position="231"/>
        <end position="251"/>
    </location>
</feature>
<feature type="transmembrane region" description="Helical" evidence="3">
    <location>
        <begin position="254"/>
        <end position="273"/>
    </location>
</feature>
<feature type="transmembrane region" description="Helical" evidence="3">
    <location>
        <begin position="294"/>
        <end position="314"/>
    </location>
</feature>
<feature type="sequence conflict" description="In Ref. 1; AAA68204." evidence="4" ref="1">
    <original>MYFI</original>
    <variation>M</variation>
    <location>
        <begin position="1"/>
        <end position="4"/>
    </location>
</feature>
<feature type="sequence conflict" description="In Ref. 1; AAA68204, 2; CAB50772 and 3; CAA32954." evidence="4" ref="1 2 3">
    <original>AF</original>
    <variation>GL</variation>
    <location>
        <begin position="18"/>
        <end position="19"/>
    </location>
</feature>
<feature type="sequence conflict" description="In Ref. 5; CAA40164." evidence="4" ref="5">
    <original>L</original>
    <variation>S</variation>
    <location>
        <position position="33"/>
    </location>
</feature>
<feature type="sequence conflict" description="In Ref. 1; AAA68204, 2; CAB50772, 3; CAA32954 and 5; CAA40164." evidence="4" ref="1 2 3 5">
    <original>IV</original>
    <variation>NE</variation>
    <location>
        <begin position="39"/>
        <end position="40"/>
    </location>
</feature>
<feature type="sequence conflict" description="In Ref. 1; AAA68204, 2; CAB50772, 3; CAA32954 and 5; CAA40164." evidence="4" ref="1 2 3 5">
    <original>I</original>
    <variation>K</variation>
    <location>
        <position position="45"/>
    </location>
</feature>
<feature type="sequence conflict" description="In Ref. 1; AAA68204, 2; CAB50772 and 3; CAA32954." evidence="4" ref="1 2 3">
    <original>L</original>
    <variation>P</variation>
    <location>
        <position position="103"/>
    </location>
</feature>
<feature type="sequence conflict" description="In Ref. 1; AAA68204, 2; CAB50772 and 3; CAA32954." evidence="4" ref="1 2 3">
    <original>II</original>
    <variation>LY</variation>
    <location>
        <begin position="148"/>
        <end position="149"/>
    </location>
</feature>
<geneLocation type="mitochondrion"/>
<dbReference type="EC" id="7.1.1.2" evidence="1"/>
<dbReference type="EMBL" id="M35826">
    <property type="protein sequence ID" value="AAA68204.1"/>
    <property type="molecule type" value="Genomic_DNA"/>
</dbReference>
<dbReference type="EMBL" id="X07479">
    <property type="protein sequence ID" value="CAB50772.1"/>
    <property type="molecule type" value="Genomic_DNA"/>
</dbReference>
<dbReference type="EMBL" id="X14848">
    <property type="protein sequence ID" value="CAA32954.1"/>
    <property type="molecule type" value="Genomic_DNA"/>
</dbReference>
<dbReference type="EMBL" id="AY172581">
    <property type="protein sequence ID" value="AAN77594.1"/>
    <property type="molecule type" value="Genomic_DNA"/>
</dbReference>
<dbReference type="EMBL" id="X56833">
    <property type="protein sequence ID" value="CAA40164.1"/>
    <property type="molecule type" value="Genomic_DNA"/>
</dbReference>
<dbReference type="PIR" id="S04747">
    <property type="entry name" value="QQRT1M"/>
</dbReference>
<dbReference type="RefSeq" id="AP_004892.1">
    <property type="nucleotide sequence ID" value="AC_000022.2"/>
</dbReference>
<dbReference type="RefSeq" id="YP_665629.1">
    <property type="nucleotide sequence ID" value="NC_001665.2"/>
</dbReference>
<dbReference type="PDB" id="1MHC">
    <property type="method" value="X-ray"/>
    <property type="resolution" value="2.10 A"/>
    <property type="chains" value="C/F=1-9"/>
</dbReference>
<dbReference type="PDBsum" id="1MHC"/>
<dbReference type="SMR" id="P03889"/>
<dbReference type="FunCoup" id="P03889">
    <property type="interactions" value="142"/>
</dbReference>
<dbReference type="STRING" id="10116.ENSRNOP00000049172"/>
<dbReference type="PaxDb" id="10116-ENSRNOP00000049172"/>
<dbReference type="Ensembl" id="ENSRNOT00000047550.4">
    <property type="protein sequence ID" value="ENSRNOP00000049172.4"/>
    <property type="gene ID" value="ENSRNOG00000030644.4"/>
</dbReference>
<dbReference type="GeneID" id="26193"/>
<dbReference type="KEGG" id="rno:26193"/>
<dbReference type="AGR" id="RGD:620555"/>
<dbReference type="CTD" id="4535"/>
<dbReference type="RGD" id="620555">
    <property type="gene designation" value="Mt-nd1"/>
</dbReference>
<dbReference type="eggNOG" id="KOG4770">
    <property type="taxonomic scope" value="Eukaryota"/>
</dbReference>
<dbReference type="GeneTree" id="ENSGT00390000006621"/>
<dbReference type="HOGENOM" id="CLU_015134_0_1_1"/>
<dbReference type="InParanoid" id="P03889"/>
<dbReference type="OMA" id="WSGWASN"/>
<dbReference type="OrthoDB" id="54363at9989"/>
<dbReference type="Reactome" id="R-RNO-611105">
    <property type="pathway name" value="Respiratory electron transport"/>
</dbReference>
<dbReference type="Reactome" id="R-RNO-6799198">
    <property type="pathway name" value="Complex I biogenesis"/>
</dbReference>
<dbReference type="EvolutionaryTrace" id="P03889"/>
<dbReference type="PRO" id="PR:P03889"/>
<dbReference type="Proteomes" id="UP000002494">
    <property type="component" value="Mitochondrion"/>
</dbReference>
<dbReference type="Bgee" id="ENSRNOG00000030644">
    <property type="expression patterns" value="Expressed in ovary and 19 other cell types or tissues"/>
</dbReference>
<dbReference type="ExpressionAtlas" id="P03889">
    <property type="expression patterns" value="baseline and differential"/>
</dbReference>
<dbReference type="GO" id="GO:0030425">
    <property type="term" value="C:dendrite"/>
    <property type="evidence" value="ECO:0000314"/>
    <property type="project" value="RGD"/>
</dbReference>
<dbReference type="GO" id="GO:0005743">
    <property type="term" value="C:mitochondrial inner membrane"/>
    <property type="evidence" value="ECO:0000250"/>
    <property type="project" value="UniProtKB"/>
</dbReference>
<dbReference type="GO" id="GO:0031966">
    <property type="term" value="C:mitochondrial membrane"/>
    <property type="evidence" value="ECO:0000266"/>
    <property type="project" value="RGD"/>
</dbReference>
<dbReference type="GO" id="GO:0043025">
    <property type="term" value="C:neuronal cell body"/>
    <property type="evidence" value="ECO:0000314"/>
    <property type="project" value="RGD"/>
</dbReference>
<dbReference type="GO" id="GO:0045271">
    <property type="term" value="C:respiratory chain complex I"/>
    <property type="evidence" value="ECO:0000266"/>
    <property type="project" value="RGD"/>
</dbReference>
<dbReference type="GO" id="GO:0008137">
    <property type="term" value="F:NADH dehydrogenase (ubiquinone) activity"/>
    <property type="evidence" value="ECO:0000250"/>
    <property type="project" value="UniProtKB"/>
</dbReference>
<dbReference type="GO" id="GO:0009060">
    <property type="term" value="P:aerobic respiration"/>
    <property type="evidence" value="ECO:0000318"/>
    <property type="project" value="GO_Central"/>
</dbReference>
<dbReference type="GO" id="GO:0006120">
    <property type="term" value="P:mitochondrial electron transport, NADH to ubiquinone"/>
    <property type="evidence" value="ECO:0000250"/>
    <property type="project" value="UniProtKB"/>
</dbReference>
<dbReference type="GO" id="GO:0032981">
    <property type="term" value="P:mitochondrial respiratory chain complex I assembly"/>
    <property type="evidence" value="ECO:0000250"/>
    <property type="project" value="UniProtKB"/>
</dbReference>
<dbReference type="GO" id="GO:0033194">
    <property type="term" value="P:response to hydroperoxide"/>
    <property type="evidence" value="ECO:0000315"/>
    <property type="project" value="RGD"/>
</dbReference>
<dbReference type="GO" id="GO:0001666">
    <property type="term" value="P:response to hypoxia"/>
    <property type="evidence" value="ECO:0000270"/>
    <property type="project" value="RGD"/>
</dbReference>
<dbReference type="GO" id="GO:0009410">
    <property type="term" value="P:response to xenobiotic stimulus"/>
    <property type="evidence" value="ECO:0000270"/>
    <property type="project" value="RGD"/>
</dbReference>
<dbReference type="HAMAP" id="MF_01350">
    <property type="entry name" value="NDH1_NuoH"/>
    <property type="match status" value="1"/>
</dbReference>
<dbReference type="InterPro" id="IPR001694">
    <property type="entry name" value="NADH_UbQ_OxRdtase_su1/FPO"/>
</dbReference>
<dbReference type="InterPro" id="IPR018086">
    <property type="entry name" value="NADH_UbQ_OxRdtase_su1_CS"/>
</dbReference>
<dbReference type="PANTHER" id="PTHR11432">
    <property type="entry name" value="NADH DEHYDROGENASE SUBUNIT 1"/>
    <property type="match status" value="1"/>
</dbReference>
<dbReference type="PANTHER" id="PTHR11432:SF3">
    <property type="entry name" value="NADH-UBIQUINONE OXIDOREDUCTASE CHAIN 1"/>
    <property type="match status" value="1"/>
</dbReference>
<dbReference type="Pfam" id="PF00146">
    <property type="entry name" value="NADHdh"/>
    <property type="match status" value="1"/>
</dbReference>
<dbReference type="PROSITE" id="PS00667">
    <property type="entry name" value="COMPLEX1_ND1_1"/>
    <property type="match status" value="1"/>
</dbReference>
<dbReference type="PROSITE" id="PS00668">
    <property type="entry name" value="COMPLEX1_ND1_2"/>
    <property type="match status" value="1"/>
</dbReference>
<sequence length="318" mass="36145">MYFINILTLLIPILIAMAFLTLVERKILGYMQLRKGPNIVGPYGILQPFADAMKLFMKEPMRPLTTSMSLFIIAPTLSLTLALSLWIPLPMPHPLINLNLGMLFILATSSLSVYSILWSGWASNSKYSLFGALRAVAQTISYEVTMAIILLSVLLMSGSFSLQMLITTQEHIWLLIPAWPMAMMWYISTLAETNRAPFDLTEGESELVSGFNVEYAAGPFALFFMAEYTNIILMNALTSIVFLGPLYHINYPELYSTSFMTETLLLSTTFLWIRASYPRFRYDQLMHLLWKNFLPLTLAFCMWYISLPIFLAGIPPYT</sequence>
<comment type="function">
    <text evidence="1">Core subunit of the mitochondrial membrane respiratory chain NADH dehydrogenase (Complex I) which catalyzes electron transfer from NADH through the respiratory chain, using ubiquinone as an electron acceptor. Essential for the catalytic activity and assembly of complex I.</text>
</comment>
<comment type="catalytic activity">
    <reaction evidence="1">
        <text>a ubiquinone + NADH + 5 H(+)(in) = a ubiquinol + NAD(+) + 4 H(+)(out)</text>
        <dbReference type="Rhea" id="RHEA:29091"/>
        <dbReference type="Rhea" id="RHEA-COMP:9565"/>
        <dbReference type="Rhea" id="RHEA-COMP:9566"/>
        <dbReference type="ChEBI" id="CHEBI:15378"/>
        <dbReference type="ChEBI" id="CHEBI:16389"/>
        <dbReference type="ChEBI" id="CHEBI:17976"/>
        <dbReference type="ChEBI" id="CHEBI:57540"/>
        <dbReference type="ChEBI" id="CHEBI:57945"/>
        <dbReference type="EC" id="7.1.1.2"/>
    </reaction>
</comment>
<comment type="subunit">
    <text evidence="2">Core subunit of respiratory chain NADH dehydrogenase (Complex I) which is composed of 45 different subunits.</text>
</comment>
<comment type="subcellular location">
    <subcellularLocation>
        <location evidence="2">Mitochondrion inner membrane</location>
        <topology evidence="3">Multi-pass membrane protein</topology>
    </subcellularLocation>
</comment>
<comment type="similarity">
    <text evidence="4">Belongs to the complex I subunit 1 family.</text>
</comment>